<comment type="function">
    <text evidence="1">The glycine cleavage system catalyzes the degradation of glycine. The P protein binds the alpha-amino group of glycine through its pyridoxal phosphate cofactor; CO(2) is released and the remaining methylamine moiety is then transferred to the lipoamide cofactor of the H protein.</text>
</comment>
<comment type="catalytic activity">
    <reaction evidence="1">
        <text>N(6)-[(R)-lipoyl]-L-lysyl-[glycine-cleavage complex H protein] + glycine + H(+) = N(6)-[(R)-S(8)-aminomethyldihydrolipoyl]-L-lysyl-[glycine-cleavage complex H protein] + CO2</text>
        <dbReference type="Rhea" id="RHEA:24304"/>
        <dbReference type="Rhea" id="RHEA-COMP:10494"/>
        <dbReference type="Rhea" id="RHEA-COMP:10495"/>
        <dbReference type="ChEBI" id="CHEBI:15378"/>
        <dbReference type="ChEBI" id="CHEBI:16526"/>
        <dbReference type="ChEBI" id="CHEBI:57305"/>
        <dbReference type="ChEBI" id="CHEBI:83099"/>
        <dbReference type="ChEBI" id="CHEBI:83143"/>
        <dbReference type="EC" id="1.4.4.2"/>
    </reaction>
</comment>
<comment type="subunit">
    <text evidence="1">The glycine cleavage system is composed of four proteins: P, T, L and H. In this organism, the P 'protein' is a heterodimer of two subunits.</text>
</comment>
<comment type="similarity">
    <text evidence="1">Belongs to the GcvP family. N-terminal subunit subfamily.</text>
</comment>
<accession>C6C0V0</accession>
<dbReference type="EC" id="1.4.4.2" evidence="1"/>
<dbReference type="EMBL" id="CP001649">
    <property type="protein sequence ID" value="ACS81047.1"/>
    <property type="molecule type" value="Genomic_DNA"/>
</dbReference>
<dbReference type="RefSeq" id="WP_015852863.1">
    <property type="nucleotide sequence ID" value="NC_012881.1"/>
</dbReference>
<dbReference type="SMR" id="C6C0V0"/>
<dbReference type="STRING" id="526222.Desal_2995"/>
<dbReference type="KEGG" id="dsa:Desal_2995"/>
<dbReference type="eggNOG" id="COG0403">
    <property type="taxonomic scope" value="Bacteria"/>
</dbReference>
<dbReference type="HOGENOM" id="CLU_004620_0_2_7"/>
<dbReference type="OrthoDB" id="9801272at2"/>
<dbReference type="Proteomes" id="UP000002601">
    <property type="component" value="Chromosome"/>
</dbReference>
<dbReference type="GO" id="GO:0004375">
    <property type="term" value="F:glycine dehydrogenase (decarboxylating) activity"/>
    <property type="evidence" value="ECO:0007669"/>
    <property type="project" value="UniProtKB-EC"/>
</dbReference>
<dbReference type="GO" id="GO:0019464">
    <property type="term" value="P:glycine decarboxylation via glycine cleavage system"/>
    <property type="evidence" value="ECO:0007669"/>
    <property type="project" value="UniProtKB-UniRule"/>
</dbReference>
<dbReference type="GO" id="GO:0009116">
    <property type="term" value="P:nucleoside metabolic process"/>
    <property type="evidence" value="ECO:0007669"/>
    <property type="project" value="InterPro"/>
</dbReference>
<dbReference type="CDD" id="cd00613">
    <property type="entry name" value="GDC-P"/>
    <property type="match status" value="1"/>
</dbReference>
<dbReference type="Gene3D" id="3.90.1150.10">
    <property type="entry name" value="Aspartate Aminotransferase, domain 1"/>
    <property type="match status" value="1"/>
</dbReference>
<dbReference type="Gene3D" id="3.40.640.10">
    <property type="entry name" value="Type I PLP-dependent aspartate aminotransferase-like (Major domain)"/>
    <property type="match status" value="1"/>
</dbReference>
<dbReference type="HAMAP" id="MF_00712">
    <property type="entry name" value="GcvPA"/>
    <property type="match status" value="1"/>
</dbReference>
<dbReference type="InterPro" id="IPR023010">
    <property type="entry name" value="GcvPA"/>
</dbReference>
<dbReference type="InterPro" id="IPR049315">
    <property type="entry name" value="GDC-P_N"/>
</dbReference>
<dbReference type="InterPro" id="IPR020581">
    <property type="entry name" value="GDC_P"/>
</dbReference>
<dbReference type="InterPro" id="IPR015424">
    <property type="entry name" value="PyrdxlP-dep_Trfase"/>
</dbReference>
<dbReference type="InterPro" id="IPR015421">
    <property type="entry name" value="PyrdxlP-dep_Trfase_major"/>
</dbReference>
<dbReference type="InterPro" id="IPR015422">
    <property type="entry name" value="PyrdxlP-dep_Trfase_small"/>
</dbReference>
<dbReference type="NCBIfam" id="NF001696">
    <property type="entry name" value="PRK00451.1"/>
    <property type="match status" value="1"/>
</dbReference>
<dbReference type="PANTHER" id="PTHR42806">
    <property type="entry name" value="GLYCINE CLEAVAGE SYSTEM P-PROTEIN"/>
    <property type="match status" value="1"/>
</dbReference>
<dbReference type="PANTHER" id="PTHR42806:SF1">
    <property type="entry name" value="GLYCINE DEHYDROGENASE (DECARBOXYLATING)"/>
    <property type="match status" value="1"/>
</dbReference>
<dbReference type="Pfam" id="PF02347">
    <property type="entry name" value="GDC-P"/>
    <property type="match status" value="1"/>
</dbReference>
<dbReference type="PIRSF" id="PIRSF006815">
    <property type="entry name" value="GcvPA"/>
    <property type="match status" value="1"/>
</dbReference>
<dbReference type="SUPFAM" id="SSF53383">
    <property type="entry name" value="PLP-dependent transferases"/>
    <property type="match status" value="1"/>
</dbReference>
<gene>
    <name evidence="1" type="primary">gcvPA</name>
    <name type="ordered locus">Desal_2995</name>
</gene>
<feature type="chain" id="PRO_1000212659" description="Probable glycine dehydrogenase (decarboxylating) subunit 1">
    <location>
        <begin position="1"/>
        <end position="443"/>
    </location>
</feature>
<protein>
    <recommendedName>
        <fullName evidence="1">Probable glycine dehydrogenase (decarboxylating) subunit 1</fullName>
        <ecNumber evidence="1">1.4.4.2</ecNumber>
    </recommendedName>
    <alternativeName>
        <fullName evidence="1">Glycine cleavage system P-protein subunit 1</fullName>
    </alternativeName>
    <alternativeName>
        <fullName evidence="1">Glycine decarboxylase subunit 1</fullName>
    </alternativeName>
    <alternativeName>
        <fullName evidence="1">Glycine dehydrogenase (aminomethyl-transferring) subunit 1</fullName>
    </alternativeName>
</protein>
<sequence>MPYVPHSPEEIREMLDVIGVNSVEDLFAEIPAELRPKSFNLPKGKSEMAVLQQLDKMAAKNTTDLTSFLGAGFYDHFIPTAVDALSSRSEFYTAYTPYQPESSQGTLQAIFEYQTAMARLMDMDYANASVYDGGSALYEATLMAVRKTRRRKIIVSEALNPIYRVMLDSYTTNLNLELVTVPHNHGRTNVKSITAAVDKDTAAVIVQNPNFFGSVNDFTEMFAAVHEHKALAIMSTYPVMQSVLKTPGQMGADIAVADGQSIGQPLSFGGPYLGIMTCSKALVRQMPGRIAGRTEDEDGKTGYVLTIQAREQHIRRQKATSNICSNQALCALRTLIHLCLLGEEGLNRTAVLSVERAHYAAERLTAIDGVEMFTKGPFGNEFAVTLPVNAFEVIDKLTERGIIPGFPVGRYYEGLENVLLVACTEKTTEEQIGIFAEILRGTI</sequence>
<organism>
    <name type="scientific">Maridesulfovibrio salexigens (strain ATCC 14822 / DSM 2638 / NCIMB 8403 / VKM B-1763)</name>
    <name type="common">Desulfovibrio salexigens</name>
    <dbReference type="NCBI Taxonomy" id="526222"/>
    <lineage>
        <taxon>Bacteria</taxon>
        <taxon>Pseudomonadati</taxon>
        <taxon>Thermodesulfobacteriota</taxon>
        <taxon>Desulfovibrionia</taxon>
        <taxon>Desulfovibrionales</taxon>
        <taxon>Desulfovibrionaceae</taxon>
        <taxon>Maridesulfovibrio</taxon>
    </lineage>
</organism>
<evidence type="ECO:0000255" key="1">
    <source>
        <dbReference type="HAMAP-Rule" id="MF_00712"/>
    </source>
</evidence>
<proteinExistence type="inferred from homology"/>
<reference key="1">
    <citation type="submission" date="2009-06" db="EMBL/GenBank/DDBJ databases">
        <title>Complete sequence of Desulfovibrio salexigens DSM 2638.</title>
        <authorList>
            <consortium name="US DOE Joint Genome Institute"/>
            <person name="Lucas S."/>
            <person name="Copeland A."/>
            <person name="Lapidus A."/>
            <person name="Glavina del Rio T."/>
            <person name="Tice H."/>
            <person name="Bruce D."/>
            <person name="Goodwin L."/>
            <person name="Pitluck S."/>
            <person name="Munk A.C."/>
            <person name="Brettin T."/>
            <person name="Detter J.C."/>
            <person name="Han C."/>
            <person name="Tapia R."/>
            <person name="Larimer F."/>
            <person name="Land M."/>
            <person name="Hauser L."/>
            <person name="Kyrpides N."/>
            <person name="Anderson I."/>
            <person name="Wall J.D."/>
            <person name="Arkin A.P."/>
            <person name="Dehal P."/>
            <person name="Chivian D."/>
            <person name="Giles B."/>
            <person name="Hazen T.C."/>
        </authorList>
    </citation>
    <scope>NUCLEOTIDE SEQUENCE [LARGE SCALE GENOMIC DNA]</scope>
    <source>
        <strain>ATCC 14822 / DSM 2638 / NCIMB 8403 / VKM B-1763</strain>
    </source>
</reference>
<name>GCSPA_MARSD</name>
<keyword id="KW-0560">Oxidoreductase</keyword>
<keyword id="KW-1185">Reference proteome</keyword>